<reference key="1">
    <citation type="journal article" date="2002" name="Proc. Natl. Acad. Sci. U.S.A.">
        <title>Extensive mosaic structure revealed by the complete genome sequence of uropathogenic Escherichia coli.</title>
        <authorList>
            <person name="Welch R.A."/>
            <person name="Burland V."/>
            <person name="Plunkett G. III"/>
            <person name="Redford P."/>
            <person name="Roesch P."/>
            <person name="Rasko D."/>
            <person name="Buckles E.L."/>
            <person name="Liou S.-R."/>
            <person name="Boutin A."/>
            <person name="Hackett J."/>
            <person name="Stroud D."/>
            <person name="Mayhew G.F."/>
            <person name="Rose D.J."/>
            <person name="Zhou S."/>
            <person name="Schwartz D.C."/>
            <person name="Perna N.T."/>
            <person name="Mobley H.L.T."/>
            <person name="Donnenberg M.S."/>
            <person name="Blattner F.R."/>
        </authorList>
    </citation>
    <scope>NUCLEOTIDE SEQUENCE [LARGE SCALE GENOMIC DNA]</scope>
    <source>
        <strain>CFT073 / ATCC 700928 / UPEC</strain>
    </source>
</reference>
<name>CCMD_ECOL6</name>
<feature type="chain" id="PRO_0000201565" description="Heme exporter protein D">
    <location>
        <begin position="1"/>
        <end position="69"/>
    </location>
</feature>
<feature type="transmembrane region" description="Helical" evidence="2">
    <location>
        <begin position="18"/>
        <end position="37"/>
    </location>
</feature>
<accession>P0ABM6</accession>
<accession>P36770</accession>
<comment type="function">
    <text evidence="1">Required for the export of heme to the periplasm for the biogenesis of c-type cytochromes.</text>
</comment>
<comment type="subcellular location">
    <subcellularLocation>
        <location evidence="3">Cell inner membrane</location>
        <topology evidence="3">Single-pass membrane protein</topology>
    </subcellularLocation>
</comment>
<comment type="similarity">
    <text evidence="3">Belongs to the CcmD/CycX/HelD family.</text>
</comment>
<dbReference type="EMBL" id="AE014075">
    <property type="protein sequence ID" value="AAN81189.1"/>
    <property type="molecule type" value="Genomic_DNA"/>
</dbReference>
<dbReference type="RefSeq" id="WP_000186540.1">
    <property type="nucleotide sequence ID" value="NZ_CP051263.1"/>
</dbReference>
<dbReference type="SMR" id="P0ABM6"/>
<dbReference type="STRING" id="199310.c2735"/>
<dbReference type="GeneID" id="93774980"/>
<dbReference type="KEGG" id="ecc:c2735"/>
<dbReference type="eggNOG" id="COG3114">
    <property type="taxonomic scope" value="Bacteria"/>
</dbReference>
<dbReference type="HOGENOM" id="CLU_180892_0_0_6"/>
<dbReference type="BioCyc" id="ECOL199310:C2735-MONOMER"/>
<dbReference type="Proteomes" id="UP000001410">
    <property type="component" value="Chromosome"/>
</dbReference>
<dbReference type="GO" id="GO:0005886">
    <property type="term" value="C:plasma membrane"/>
    <property type="evidence" value="ECO:0007669"/>
    <property type="project" value="UniProtKB-SubCell"/>
</dbReference>
<dbReference type="GO" id="GO:1903607">
    <property type="term" value="P:cytochrome c biosynthetic process"/>
    <property type="evidence" value="ECO:0007669"/>
    <property type="project" value="TreeGrafter"/>
</dbReference>
<dbReference type="GO" id="GO:0017004">
    <property type="term" value="P:cytochrome complex assembly"/>
    <property type="evidence" value="ECO:0007669"/>
    <property type="project" value="UniProtKB-KW"/>
</dbReference>
<dbReference type="GO" id="GO:0015886">
    <property type="term" value="P:heme transport"/>
    <property type="evidence" value="ECO:0007669"/>
    <property type="project" value="InterPro"/>
</dbReference>
<dbReference type="InterPro" id="IPR007078">
    <property type="entry name" value="Haem_export_protD_CcmD"/>
</dbReference>
<dbReference type="InterPro" id="IPR052075">
    <property type="entry name" value="Heme_exporter_D"/>
</dbReference>
<dbReference type="NCBIfam" id="TIGR03141">
    <property type="entry name" value="cytochro_ccmD"/>
    <property type="match status" value="1"/>
</dbReference>
<dbReference type="PANTHER" id="PTHR37531">
    <property type="entry name" value="HEME EXPORTER PROTEIN D"/>
    <property type="match status" value="1"/>
</dbReference>
<dbReference type="PANTHER" id="PTHR37531:SF1">
    <property type="entry name" value="HEME EXPORTER PROTEIN D"/>
    <property type="match status" value="1"/>
</dbReference>
<dbReference type="Pfam" id="PF04995">
    <property type="entry name" value="CcmD"/>
    <property type="match status" value="1"/>
</dbReference>
<proteinExistence type="inferred from homology"/>
<sequence length="69" mass="7745">MTPAFASWNEFFAMGGYAFFVWLAVVMTVIPLVVLVVHSVMQHRAILRGVAQQRAREARLRAAQQQEAA</sequence>
<evidence type="ECO:0000250" key="1"/>
<evidence type="ECO:0000255" key="2"/>
<evidence type="ECO:0000305" key="3"/>
<protein>
    <recommendedName>
        <fullName>Heme exporter protein D</fullName>
    </recommendedName>
    <alternativeName>
        <fullName>Cytochrome c-type biogenesis protein CcmD</fullName>
    </alternativeName>
</protein>
<organism>
    <name type="scientific">Escherichia coli O6:H1 (strain CFT073 / ATCC 700928 / UPEC)</name>
    <dbReference type="NCBI Taxonomy" id="199310"/>
    <lineage>
        <taxon>Bacteria</taxon>
        <taxon>Pseudomonadati</taxon>
        <taxon>Pseudomonadota</taxon>
        <taxon>Gammaproteobacteria</taxon>
        <taxon>Enterobacterales</taxon>
        <taxon>Enterobacteriaceae</taxon>
        <taxon>Escherichia</taxon>
    </lineage>
</organism>
<keyword id="KW-0997">Cell inner membrane</keyword>
<keyword id="KW-1003">Cell membrane</keyword>
<keyword id="KW-0201">Cytochrome c-type biogenesis</keyword>
<keyword id="KW-0472">Membrane</keyword>
<keyword id="KW-1185">Reference proteome</keyword>
<keyword id="KW-0812">Transmembrane</keyword>
<keyword id="KW-1133">Transmembrane helix</keyword>
<keyword id="KW-0813">Transport</keyword>
<gene>
    <name type="primary">ccmD</name>
    <name type="ordered locus">c2735</name>
</gene>